<dbReference type="EC" id="3.4.23.36" evidence="1"/>
<dbReference type="EMBL" id="CP000232">
    <property type="protein sequence ID" value="ABC19185.1"/>
    <property type="molecule type" value="Genomic_DNA"/>
</dbReference>
<dbReference type="RefSeq" id="YP_429728.1">
    <property type="nucleotide sequence ID" value="NC_007644.1"/>
</dbReference>
<dbReference type="SMR" id="Q2RK54"/>
<dbReference type="STRING" id="264732.Moth_0868"/>
<dbReference type="EnsemblBacteria" id="ABC19185">
    <property type="protein sequence ID" value="ABC19185"/>
    <property type="gene ID" value="Moth_0868"/>
</dbReference>
<dbReference type="KEGG" id="mta:Moth_0868"/>
<dbReference type="PATRIC" id="fig|264732.11.peg.932"/>
<dbReference type="eggNOG" id="COG0597">
    <property type="taxonomic scope" value="Bacteria"/>
</dbReference>
<dbReference type="HOGENOM" id="CLU_083252_3_4_9"/>
<dbReference type="OrthoDB" id="9810259at2"/>
<dbReference type="UniPathway" id="UPA00665"/>
<dbReference type="GO" id="GO:0005886">
    <property type="term" value="C:plasma membrane"/>
    <property type="evidence" value="ECO:0007669"/>
    <property type="project" value="UniProtKB-SubCell"/>
</dbReference>
<dbReference type="GO" id="GO:0004190">
    <property type="term" value="F:aspartic-type endopeptidase activity"/>
    <property type="evidence" value="ECO:0007669"/>
    <property type="project" value="UniProtKB-UniRule"/>
</dbReference>
<dbReference type="GO" id="GO:0006508">
    <property type="term" value="P:proteolysis"/>
    <property type="evidence" value="ECO:0007669"/>
    <property type="project" value="UniProtKB-KW"/>
</dbReference>
<dbReference type="HAMAP" id="MF_00161">
    <property type="entry name" value="LspA"/>
    <property type="match status" value="1"/>
</dbReference>
<dbReference type="InterPro" id="IPR001872">
    <property type="entry name" value="Peptidase_A8"/>
</dbReference>
<dbReference type="NCBIfam" id="TIGR00077">
    <property type="entry name" value="lspA"/>
    <property type="match status" value="1"/>
</dbReference>
<dbReference type="PANTHER" id="PTHR33695">
    <property type="entry name" value="LIPOPROTEIN SIGNAL PEPTIDASE"/>
    <property type="match status" value="1"/>
</dbReference>
<dbReference type="PANTHER" id="PTHR33695:SF1">
    <property type="entry name" value="LIPOPROTEIN SIGNAL PEPTIDASE"/>
    <property type="match status" value="1"/>
</dbReference>
<dbReference type="Pfam" id="PF01252">
    <property type="entry name" value="Peptidase_A8"/>
    <property type="match status" value="1"/>
</dbReference>
<dbReference type="PRINTS" id="PR00781">
    <property type="entry name" value="LIPOSIGPTASE"/>
</dbReference>
<dbReference type="PROSITE" id="PS00855">
    <property type="entry name" value="SPASE_II"/>
    <property type="match status" value="1"/>
</dbReference>
<reference key="1">
    <citation type="journal article" date="2008" name="Environ. Microbiol.">
        <title>The complete genome sequence of Moorella thermoacetica (f. Clostridium thermoaceticum).</title>
        <authorList>
            <person name="Pierce E."/>
            <person name="Xie G."/>
            <person name="Barabote R.D."/>
            <person name="Saunders E."/>
            <person name="Han C.S."/>
            <person name="Detter J.C."/>
            <person name="Richardson P."/>
            <person name="Brettin T.S."/>
            <person name="Das A."/>
            <person name="Ljungdahl L.G."/>
            <person name="Ragsdale S.W."/>
        </authorList>
    </citation>
    <scope>NUCLEOTIDE SEQUENCE [LARGE SCALE GENOMIC DNA]</scope>
    <source>
        <strain>ATCC 39073 / JCM 9320</strain>
    </source>
</reference>
<accession>Q2RK54</accession>
<sequence>MPFLLLALLVLAIDQLSKYMIRTNFQPNESLPVIGSFFHLTYVHNPGAAFGLLANKTQVFVGVTVLVAIIILAAYRYLPPDRPLLRLSLALMLGGALGNLIDRLRFGYVVDFLDLRIWPVFNLADMAIVFGVIILCWQLLLPAGEQGREP</sequence>
<gene>
    <name evidence="1" type="primary">lspA</name>
    <name type="ordered locus">Moth_0868</name>
</gene>
<protein>
    <recommendedName>
        <fullName evidence="1">Lipoprotein signal peptidase</fullName>
        <ecNumber evidence="1">3.4.23.36</ecNumber>
    </recommendedName>
    <alternativeName>
        <fullName evidence="1">Prolipoprotein signal peptidase</fullName>
    </alternativeName>
    <alternativeName>
        <fullName evidence="1">Signal peptidase II</fullName>
        <shortName evidence="1">SPase II</shortName>
    </alternativeName>
</protein>
<comment type="function">
    <text evidence="1">This protein specifically catalyzes the removal of signal peptides from prolipoproteins.</text>
</comment>
<comment type="catalytic activity">
    <reaction evidence="1">
        <text>Release of signal peptides from bacterial membrane prolipoproteins. Hydrolyzes -Xaa-Yaa-Zaa-|-(S,diacylglyceryl)Cys-, in which Xaa is hydrophobic (preferably Leu), and Yaa (Ala or Ser) and Zaa (Gly or Ala) have small, neutral side chains.</text>
        <dbReference type="EC" id="3.4.23.36"/>
    </reaction>
</comment>
<comment type="pathway">
    <text evidence="1">Protein modification; lipoprotein biosynthesis (signal peptide cleavage).</text>
</comment>
<comment type="subcellular location">
    <subcellularLocation>
        <location evidence="1">Cell membrane</location>
        <topology evidence="1">Multi-pass membrane protein</topology>
    </subcellularLocation>
</comment>
<comment type="similarity">
    <text evidence="1">Belongs to the peptidase A8 family.</text>
</comment>
<feature type="chain" id="PRO_1000076925" description="Lipoprotein signal peptidase">
    <location>
        <begin position="1"/>
        <end position="150"/>
    </location>
</feature>
<feature type="transmembrane region" description="Helical" evidence="1">
    <location>
        <begin position="59"/>
        <end position="79"/>
    </location>
</feature>
<feature type="transmembrane region" description="Helical" evidence="1">
    <location>
        <begin position="84"/>
        <end position="101"/>
    </location>
</feature>
<feature type="transmembrane region" description="Helical" evidence="1">
    <location>
        <begin position="117"/>
        <end position="137"/>
    </location>
</feature>
<feature type="active site" evidence="1">
    <location>
        <position position="111"/>
    </location>
</feature>
<feature type="active site" evidence="1">
    <location>
        <position position="125"/>
    </location>
</feature>
<name>LSPA_MOOTA</name>
<evidence type="ECO:0000255" key="1">
    <source>
        <dbReference type="HAMAP-Rule" id="MF_00161"/>
    </source>
</evidence>
<keyword id="KW-0064">Aspartyl protease</keyword>
<keyword id="KW-1003">Cell membrane</keyword>
<keyword id="KW-0378">Hydrolase</keyword>
<keyword id="KW-0472">Membrane</keyword>
<keyword id="KW-0645">Protease</keyword>
<keyword id="KW-0812">Transmembrane</keyword>
<keyword id="KW-1133">Transmembrane helix</keyword>
<proteinExistence type="inferred from homology"/>
<organism>
    <name type="scientific">Moorella thermoacetica (strain ATCC 39073 / JCM 9320)</name>
    <dbReference type="NCBI Taxonomy" id="264732"/>
    <lineage>
        <taxon>Bacteria</taxon>
        <taxon>Bacillati</taxon>
        <taxon>Bacillota</taxon>
        <taxon>Clostridia</taxon>
        <taxon>Moorellales</taxon>
        <taxon>Moorellaceae</taxon>
        <taxon>Moorella</taxon>
    </lineage>
</organism>